<feature type="chain" id="PRO_1000056844" description="Nucleotide-binding protein PA14_57970">
    <location>
        <begin position="1"/>
        <end position="286"/>
    </location>
</feature>
<feature type="binding site" evidence="1">
    <location>
        <begin position="8"/>
        <end position="15"/>
    </location>
    <ligand>
        <name>ATP</name>
        <dbReference type="ChEBI" id="CHEBI:30616"/>
    </ligand>
</feature>
<feature type="binding site" evidence="1">
    <location>
        <begin position="60"/>
        <end position="63"/>
    </location>
    <ligand>
        <name>GTP</name>
        <dbReference type="ChEBI" id="CHEBI:37565"/>
    </ligand>
</feature>
<name>Y5797_PSEAB</name>
<reference key="1">
    <citation type="journal article" date="2006" name="Genome Biol.">
        <title>Genomic analysis reveals that Pseudomonas aeruginosa virulence is combinatorial.</title>
        <authorList>
            <person name="Lee D.G."/>
            <person name="Urbach J.M."/>
            <person name="Wu G."/>
            <person name="Liberati N.T."/>
            <person name="Feinbaum R.L."/>
            <person name="Miyata S."/>
            <person name="Diggins L.T."/>
            <person name="He J."/>
            <person name="Saucier M."/>
            <person name="Deziel E."/>
            <person name="Friedman L."/>
            <person name="Li L."/>
            <person name="Grills G."/>
            <person name="Montgomery K."/>
            <person name="Kucherlapati R."/>
            <person name="Rahme L.G."/>
            <person name="Ausubel F.M."/>
        </authorList>
    </citation>
    <scope>NUCLEOTIDE SEQUENCE [LARGE SCALE GENOMIC DNA]</scope>
    <source>
        <strain>UCBPP-PA14</strain>
    </source>
</reference>
<gene>
    <name type="ordered locus">PA14_57970</name>
</gene>
<evidence type="ECO:0000255" key="1">
    <source>
        <dbReference type="HAMAP-Rule" id="MF_00636"/>
    </source>
</evidence>
<sequence>MRLIIVSGRSGSGKSTALNVLEDNGFYCIDNLPASLLPDLAQRALLHTELLQPQVAVSIDARNLPSQLQRFPELLQEVRDNHINCDVLYLDADDETLLKRFSETRRRHPLTTDTRSLAEAIGDESQLLGPIADLADLKLDTTSLNLYQLRDTIKLRLLNKPEPGTAFLVESFGFKRGMPVDADLVFDVRCLPNPYWKPELRDHSGLEPEVREYLAAQPDVEEMYQDIVGYLNKWLPRFAASNRSYVTVAIGCTGGHHRSVYLAERIGAALRDSLKNVQIRHRDLSS</sequence>
<dbReference type="EMBL" id="CP000438">
    <property type="protein sequence ID" value="ABJ13733.1"/>
    <property type="molecule type" value="Genomic_DNA"/>
</dbReference>
<dbReference type="SMR" id="Q02GX6"/>
<dbReference type="KEGG" id="pau:PA14_57970"/>
<dbReference type="PseudoCAP" id="PA14_57970"/>
<dbReference type="HOGENOM" id="CLU_059558_1_1_6"/>
<dbReference type="BioCyc" id="PAER208963:G1G74-4883-MONOMER"/>
<dbReference type="Proteomes" id="UP000000653">
    <property type="component" value="Chromosome"/>
</dbReference>
<dbReference type="GO" id="GO:0005524">
    <property type="term" value="F:ATP binding"/>
    <property type="evidence" value="ECO:0007669"/>
    <property type="project" value="UniProtKB-UniRule"/>
</dbReference>
<dbReference type="GO" id="GO:0005525">
    <property type="term" value="F:GTP binding"/>
    <property type="evidence" value="ECO:0007669"/>
    <property type="project" value="UniProtKB-UniRule"/>
</dbReference>
<dbReference type="Gene3D" id="3.40.50.300">
    <property type="entry name" value="P-loop containing nucleotide triphosphate hydrolases"/>
    <property type="match status" value="1"/>
</dbReference>
<dbReference type="HAMAP" id="MF_00636">
    <property type="entry name" value="RapZ_like"/>
    <property type="match status" value="1"/>
</dbReference>
<dbReference type="InterPro" id="IPR027417">
    <property type="entry name" value="P-loop_NTPase"/>
</dbReference>
<dbReference type="InterPro" id="IPR005337">
    <property type="entry name" value="RapZ-like"/>
</dbReference>
<dbReference type="InterPro" id="IPR053930">
    <property type="entry name" value="RapZ-like_N"/>
</dbReference>
<dbReference type="InterPro" id="IPR053931">
    <property type="entry name" value="RapZ_C"/>
</dbReference>
<dbReference type="NCBIfam" id="NF003828">
    <property type="entry name" value="PRK05416.1"/>
    <property type="match status" value="1"/>
</dbReference>
<dbReference type="PANTHER" id="PTHR30448">
    <property type="entry name" value="RNASE ADAPTER PROTEIN RAPZ"/>
    <property type="match status" value="1"/>
</dbReference>
<dbReference type="PANTHER" id="PTHR30448:SF0">
    <property type="entry name" value="RNASE ADAPTER PROTEIN RAPZ"/>
    <property type="match status" value="1"/>
</dbReference>
<dbReference type="Pfam" id="PF22740">
    <property type="entry name" value="PapZ_C"/>
    <property type="match status" value="1"/>
</dbReference>
<dbReference type="Pfam" id="PF03668">
    <property type="entry name" value="RapZ-like_N"/>
    <property type="match status" value="1"/>
</dbReference>
<dbReference type="PIRSF" id="PIRSF005052">
    <property type="entry name" value="P-loopkin"/>
    <property type="match status" value="1"/>
</dbReference>
<dbReference type="SUPFAM" id="SSF52540">
    <property type="entry name" value="P-loop containing nucleoside triphosphate hydrolases"/>
    <property type="match status" value="1"/>
</dbReference>
<proteinExistence type="inferred from homology"/>
<comment type="function">
    <text evidence="1">Displays ATPase and GTPase activities.</text>
</comment>
<comment type="similarity">
    <text evidence="1">Belongs to the RapZ-like family.</text>
</comment>
<accession>Q02GX6</accession>
<keyword id="KW-0067">ATP-binding</keyword>
<keyword id="KW-0342">GTP-binding</keyword>
<keyword id="KW-0547">Nucleotide-binding</keyword>
<protein>
    <recommendedName>
        <fullName evidence="1">Nucleotide-binding protein PA14_57970</fullName>
    </recommendedName>
</protein>
<organism>
    <name type="scientific">Pseudomonas aeruginosa (strain UCBPP-PA14)</name>
    <dbReference type="NCBI Taxonomy" id="208963"/>
    <lineage>
        <taxon>Bacteria</taxon>
        <taxon>Pseudomonadati</taxon>
        <taxon>Pseudomonadota</taxon>
        <taxon>Gammaproteobacteria</taxon>
        <taxon>Pseudomonadales</taxon>
        <taxon>Pseudomonadaceae</taxon>
        <taxon>Pseudomonas</taxon>
    </lineage>
</organism>